<reference key="1">
    <citation type="journal article" date="2006" name="BMC Genomics">
        <title>Complete genome sequence of Shigella flexneri 5b and comparison with Shigella flexneri 2a.</title>
        <authorList>
            <person name="Nie H."/>
            <person name="Yang F."/>
            <person name="Zhang X."/>
            <person name="Yang J."/>
            <person name="Chen L."/>
            <person name="Wang J."/>
            <person name="Xiong Z."/>
            <person name="Peng J."/>
            <person name="Sun L."/>
            <person name="Dong J."/>
            <person name="Xue Y."/>
            <person name="Xu X."/>
            <person name="Chen S."/>
            <person name="Yao Z."/>
            <person name="Shen Y."/>
            <person name="Jin Q."/>
        </authorList>
    </citation>
    <scope>NUCLEOTIDE SEQUENCE [LARGE SCALE GENOMIC DNA]</scope>
    <source>
        <strain>8401</strain>
    </source>
</reference>
<sequence length="207" mass="23431">MLNKLSLLLKDAGISLTDHQKNQLIAYVNMLHKWNKAYNLTSVRDPNEMLVRHILDSIVVAPYLQGERFIDVGTGPGLPGIPLSIVRPEAHFTLLDSLGKRVRFLRQVQHELKLENIEPVQSRVEEFPSEPPFDGVISRAFASLNDMVSWCHHLPGEQGRFYALKGQMPEDEIALLPEEYQVESVVKLQVPALDGERHLVVIKANKI</sequence>
<accession>Q0SYT6</accession>
<organism>
    <name type="scientific">Shigella flexneri serotype 5b (strain 8401)</name>
    <dbReference type="NCBI Taxonomy" id="373384"/>
    <lineage>
        <taxon>Bacteria</taxon>
        <taxon>Pseudomonadati</taxon>
        <taxon>Pseudomonadota</taxon>
        <taxon>Gammaproteobacteria</taxon>
        <taxon>Enterobacterales</taxon>
        <taxon>Enterobacteriaceae</taxon>
        <taxon>Shigella</taxon>
    </lineage>
</organism>
<proteinExistence type="inferred from homology"/>
<dbReference type="EC" id="2.1.1.170" evidence="1"/>
<dbReference type="EMBL" id="CP000266">
    <property type="protein sequence ID" value="ABF05779.1"/>
    <property type="molecule type" value="Genomic_DNA"/>
</dbReference>
<dbReference type="RefSeq" id="WP_000932839.1">
    <property type="nucleotide sequence ID" value="NC_008258.1"/>
</dbReference>
<dbReference type="SMR" id="Q0SYT6"/>
<dbReference type="GeneID" id="93778227"/>
<dbReference type="KEGG" id="sfv:SFV_3766"/>
<dbReference type="HOGENOM" id="CLU_065341_2_2_6"/>
<dbReference type="Proteomes" id="UP000000659">
    <property type="component" value="Chromosome"/>
</dbReference>
<dbReference type="GO" id="GO:0005829">
    <property type="term" value="C:cytosol"/>
    <property type="evidence" value="ECO:0007669"/>
    <property type="project" value="TreeGrafter"/>
</dbReference>
<dbReference type="GO" id="GO:0070043">
    <property type="term" value="F:rRNA (guanine-N7-)-methyltransferase activity"/>
    <property type="evidence" value="ECO:0007669"/>
    <property type="project" value="UniProtKB-UniRule"/>
</dbReference>
<dbReference type="CDD" id="cd02440">
    <property type="entry name" value="AdoMet_MTases"/>
    <property type="match status" value="1"/>
</dbReference>
<dbReference type="FunFam" id="3.40.50.150:FF:000032">
    <property type="entry name" value="Ribosomal RNA small subunit methyltransferase G"/>
    <property type="match status" value="1"/>
</dbReference>
<dbReference type="Gene3D" id="3.40.50.150">
    <property type="entry name" value="Vaccinia Virus protein VP39"/>
    <property type="match status" value="1"/>
</dbReference>
<dbReference type="HAMAP" id="MF_00074">
    <property type="entry name" value="16SrRNA_methyltr_G"/>
    <property type="match status" value="1"/>
</dbReference>
<dbReference type="InterPro" id="IPR003682">
    <property type="entry name" value="rRNA_ssu_MeTfrase_G"/>
</dbReference>
<dbReference type="InterPro" id="IPR029063">
    <property type="entry name" value="SAM-dependent_MTases_sf"/>
</dbReference>
<dbReference type="NCBIfam" id="TIGR00138">
    <property type="entry name" value="rsmG_gidB"/>
    <property type="match status" value="1"/>
</dbReference>
<dbReference type="PANTHER" id="PTHR31760">
    <property type="entry name" value="S-ADENOSYL-L-METHIONINE-DEPENDENT METHYLTRANSFERASES SUPERFAMILY PROTEIN"/>
    <property type="match status" value="1"/>
</dbReference>
<dbReference type="PANTHER" id="PTHR31760:SF0">
    <property type="entry name" value="S-ADENOSYL-L-METHIONINE-DEPENDENT METHYLTRANSFERASES SUPERFAMILY PROTEIN"/>
    <property type="match status" value="1"/>
</dbReference>
<dbReference type="Pfam" id="PF02527">
    <property type="entry name" value="GidB"/>
    <property type="match status" value="1"/>
</dbReference>
<dbReference type="PIRSF" id="PIRSF003078">
    <property type="entry name" value="GidB"/>
    <property type="match status" value="1"/>
</dbReference>
<dbReference type="SUPFAM" id="SSF53335">
    <property type="entry name" value="S-adenosyl-L-methionine-dependent methyltransferases"/>
    <property type="match status" value="1"/>
</dbReference>
<name>RSMG_SHIF8</name>
<protein>
    <recommendedName>
        <fullName evidence="1">Ribosomal RNA small subunit methyltransferase G</fullName>
        <ecNumber evidence="1">2.1.1.170</ecNumber>
    </recommendedName>
    <alternativeName>
        <fullName evidence="1">16S rRNA 7-methylguanosine methyltransferase</fullName>
        <shortName evidence="1">16S rRNA m7G methyltransferase</shortName>
    </alternativeName>
</protein>
<feature type="chain" id="PRO_1000010209" description="Ribosomal RNA small subunit methyltransferase G">
    <location>
        <begin position="1"/>
        <end position="207"/>
    </location>
</feature>
<feature type="binding site" evidence="1">
    <location>
        <position position="73"/>
    </location>
    <ligand>
        <name>S-adenosyl-L-methionine</name>
        <dbReference type="ChEBI" id="CHEBI:59789"/>
    </ligand>
</feature>
<feature type="binding site" evidence="1">
    <location>
        <position position="78"/>
    </location>
    <ligand>
        <name>S-adenosyl-L-methionine</name>
        <dbReference type="ChEBI" id="CHEBI:59789"/>
    </ligand>
</feature>
<feature type="binding site" evidence="1">
    <location>
        <begin position="124"/>
        <end position="125"/>
    </location>
    <ligand>
        <name>S-adenosyl-L-methionine</name>
        <dbReference type="ChEBI" id="CHEBI:59789"/>
    </ligand>
</feature>
<feature type="binding site" evidence="1">
    <location>
        <position position="139"/>
    </location>
    <ligand>
        <name>S-adenosyl-L-methionine</name>
        <dbReference type="ChEBI" id="CHEBI:59789"/>
    </ligand>
</feature>
<gene>
    <name evidence="1" type="primary">rsmG</name>
    <name type="ordered locus">SFV_3766</name>
</gene>
<keyword id="KW-0963">Cytoplasm</keyword>
<keyword id="KW-0489">Methyltransferase</keyword>
<keyword id="KW-0698">rRNA processing</keyword>
<keyword id="KW-0949">S-adenosyl-L-methionine</keyword>
<keyword id="KW-0808">Transferase</keyword>
<evidence type="ECO:0000255" key="1">
    <source>
        <dbReference type="HAMAP-Rule" id="MF_00074"/>
    </source>
</evidence>
<comment type="function">
    <text evidence="1">Specifically methylates the N7 position of guanine in position 527 of 16S rRNA.</text>
</comment>
<comment type="catalytic activity">
    <reaction evidence="1">
        <text>guanosine(527) in 16S rRNA + S-adenosyl-L-methionine = N(7)-methylguanosine(527) in 16S rRNA + S-adenosyl-L-homocysteine</text>
        <dbReference type="Rhea" id="RHEA:42732"/>
        <dbReference type="Rhea" id="RHEA-COMP:10209"/>
        <dbReference type="Rhea" id="RHEA-COMP:10210"/>
        <dbReference type="ChEBI" id="CHEBI:57856"/>
        <dbReference type="ChEBI" id="CHEBI:59789"/>
        <dbReference type="ChEBI" id="CHEBI:74269"/>
        <dbReference type="ChEBI" id="CHEBI:74480"/>
        <dbReference type="EC" id="2.1.1.170"/>
    </reaction>
</comment>
<comment type="subcellular location">
    <subcellularLocation>
        <location evidence="1">Cytoplasm</location>
    </subcellularLocation>
</comment>
<comment type="similarity">
    <text evidence="1">Belongs to the methyltransferase superfamily. RNA methyltransferase RsmG family.</text>
</comment>